<sequence>MTPQCQSYLQQFETYMQSERQLSAHTVRNYMYELQRGSELLPEGVDLLNVGREHWQQVLAKLHRKGLSPRSLSLWLSAIKQWGEFLLRSGVIELNPAKGLSAPKQAKPLPKNIDVDSISHLLAIEGNDPLTLRDKAIMELFYSSGLRLAELAALDLSSVQYDQHEVRVLGKGNKERIVPVGRYAIEAISAWLKCRKQISCEDNALFVTEKGKRLSHRSIQARMSKWGQEQALSMRVHPHKLRHSFATHMLESSADLRAVQELLGHENLSTTQIYTSLDFQHLAKVYDNAHPRAKKQQDK</sequence>
<comment type="function">
    <text evidence="1">Site-specific tyrosine recombinase, which acts by catalyzing the cutting and rejoining of the recombining DNA molecules. The XerC-XerD complex is essential to convert dimers of the bacterial chromosome into monomers to permit their segregation at cell division. It also contributes to the segregational stability of plasmids.</text>
</comment>
<comment type="subunit">
    <text evidence="1">Forms a cyclic heterotetrameric complex composed of two molecules of XerC and two molecules of XerD.</text>
</comment>
<comment type="subcellular location">
    <subcellularLocation>
        <location evidence="1">Cytoplasm</location>
    </subcellularLocation>
</comment>
<comment type="similarity">
    <text evidence="1">Belongs to the 'phage' integrase family. XerC subfamily.</text>
</comment>
<proteinExistence type="inferred from homology"/>
<evidence type="ECO:0000255" key="1">
    <source>
        <dbReference type="HAMAP-Rule" id="MF_01808"/>
    </source>
</evidence>
<evidence type="ECO:0000255" key="2">
    <source>
        <dbReference type="PROSITE-ProRule" id="PRU01246"/>
    </source>
</evidence>
<evidence type="ECO:0000255" key="3">
    <source>
        <dbReference type="PROSITE-ProRule" id="PRU01248"/>
    </source>
</evidence>
<dbReference type="EMBL" id="CP000469">
    <property type="protein sequence ID" value="ABK46636.1"/>
    <property type="molecule type" value="Genomic_DNA"/>
</dbReference>
<dbReference type="RefSeq" id="WP_011621200.1">
    <property type="nucleotide sequence ID" value="NC_008577.1"/>
</dbReference>
<dbReference type="SMR" id="A0KS67"/>
<dbReference type="STRING" id="94122.Shewana3_0393"/>
<dbReference type="KEGG" id="shn:Shewana3_0393"/>
<dbReference type="eggNOG" id="COG4973">
    <property type="taxonomic scope" value="Bacteria"/>
</dbReference>
<dbReference type="HOGENOM" id="CLU_027562_9_0_6"/>
<dbReference type="OrthoDB" id="9801717at2"/>
<dbReference type="Proteomes" id="UP000002589">
    <property type="component" value="Chromosome"/>
</dbReference>
<dbReference type="GO" id="GO:0005737">
    <property type="term" value="C:cytoplasm"/>
    <property type="evidence" value="ECO:0007669"/>
    <property type="project" value="UniProtKB-SubCell"/>
</dbReference>
<dbReference type="GO" id="GO:0003677">
    <property type="term" value="F:DNA binding"/>
    <property type="evidence" value="ECO:0007669"/>
    <property type="project" value="UniProtKB-KW"/>
</dbReference>
<dbReference type="GO" id="GO:0009037">
    <property type="term" value="F:tyrosine-based site-specific recombinase activity"/>
    <property type="evidence" value="ECO:0007669"/>
    <property type="project" value="UniProtKB-UniRule"/>
</dbReference>
<dbReference type="GO" id="GO:0051301">
    <property type="term" value="P:cell division"/>
    <property type="evidence" value="ECO:0007669"/>
    <property type="project" value="UniProtKB-KW"/>
</dbReference>
<dbReference type="GO" id="GO:0007059">
    <property type="term" value="P:chromosome segregation"/>
    <property type="evidence" value="ECO:0007669"/>
    <property type="project" value="UniProtKB-UniRule"/>
</dbReference>
<dbReference type="GO" id="GO:0006313">
    <property type="term" value="P:DNA transposition"/>
    <property type="evidence" value="ECO:0007669"/>
    <property type="project" value="UniProtKB-UniRule"/>
</dbReference>
<dbReference type="CDD" id="cd00798">
    <property type="entry name" value="INT_XerDC_C"/>
    <property type="match status" value="1"/>
</dbReference>
<dbReference type="Gene3D" id="1.10.150.130">
    <property type="match status" value="1"/>
</dbReference>
<dbReference type="Gene3D" id="1.10.443.10">
    <property type="entry name" value="Intergrase catalytic core"/>
    <property type="match status" value="1"/>
</dbReference>
<dbReference type="HAMAP" id="MF_01808">
    <property type="entry name" value="Recomb_XerC_XerD"/>
    <property type="match status" value="1"/>
</dbReference>
<dbReference type="InterPro" id="IPR044068">
    <property type="entry name" value="CB"/>
</dbReference>
<dbReference type="InterPro" id="IPR011010">
    <property type="entry name" value="DNA_brk_join_enz"/>
</dbReference>
<dbReference type="InterPro" id="IPR013762">
    <property type="entry name" value="Integrase-like_cat_sf"/>
</dbReference>
<dbReference type="InterPro" id="IPR002104">
    <property type="entry name" value="Integrase_catalytic"/>
</dbReference>
<dbReference type="InterPro" id="IPR010998">
    <property type="entry name" value="Integrase_recombinase_N"/>
</dbReference>
<dbReference type="InterPro" id="IPR004107">
    <property type="entry name" value="Integrase_SAM-like_N"/>
</dbReference>
<dbReference type="InterPro" id="IPR011931">
    <property type="entry name" value="Recomb_XerC"/>
</dbReference>
<dbReference type="InterPro" id="IPR023009">
    <property type="entry name" value="Tyrosine_recombinase_XerC/XerD"/>
</dbReference>
<dbReference type="InterPro" id="IPR050090">
    <property type="entry name" value="Tyrosine_recombinase_XerCD"/>
</dbReference>
<dbReference type="NCBIfam" id="TIGR02224">
    <property type="entry name" value="recomb_XerC"/>
    <property type="match status" value="1"/>
</dbReference>
<dbReference type="PANTHER" id="PTHR30349">
    <property type="entry name" value="PHAGE INTEGRASE-RELATED"/>
    <property type="match status" value="1"/>
</dbReference>
<dbReference type="PANTHER" id="PTHR30349:SF81">
    <property type="entry name" value="TYROSINE RECOMBINASE XERC"/>
    <property type="match status" value="1"/>
</dbReference>
<dbReference type="Pfam" id="PF02899">
    <property type="entry name" value="Phage_int_SAM_1"/>
    <property type="match status" value="1"/>
</dbReference>
<dbReference type="Pfam" id="PF00589">
    <property type="entry name" value="Phage_integrase"/>
    <property type="match status" value="1"/>
</dbReference>
<dbReference type="SUPFAM" id="SSF56349">
    <property type="entry name" value="DNA breaking-rejoining enzymes"/>
    <property type="match status" value="1"/>
</dbReference>
<dbReference type="SUPFAM" id="SSF47823">
    <property type="entry name" value="lambda integrase-like, N-terminal domain"/>
    <property type="match status" value="1"/>
</dbReference>
<dbReference type="PROSITE" id="PS51900">
    <property type="entry name" value="CB"/>
    <property type="match status" value="1"/>
</dbReference>
<dbReference type="PROSITE" id="PS51898">
    <property type="entry name" value="TYR_RECOMBINASE"/>
    <property type="match status" value="1"/>
</dbReference>
<accession>A0KS67</accession>
<reference key="1">
    <citation type="submission" date="2006-09" db="EMBL/GenBank/DDBJ databases">
        <title>Complete sequence of chromosome 1 of Shewanella sp. ANA-3.</title>
        <authorList>
            <person name="Copeland A."/>
            <person name="Lucas S."/>
            <person name="Lapidus A."/>
            <person name="Barry K."/>
            <person name="Detter J.C."/>
            <person name="Glavina del Rio T."/>
            <person name="Hammon N."/>
            <person name="Israni S."/>
            <person name="Dalin E."/>
            <person name="Tice H."/>
            <person name="Pitluck S."/>
            <person name="Chertkov O."/>
            <person name="Brettin T."/>
            <person name="Bruce D."/>
            <person name="Han C."/>
            <person name="Tapia R."/>
            <person name="Gilna P."/>
            <person name="Schmutz J."/>
            <person name="Larimer F."/>
            <person name="Land M."/>
            <person name="Hauser L."/>
            <person name="Kyrpides N."/>
            <person name="Kim E."/>
            <person name="Newman D."/>
            <person name="Salticov C."/>
            <person name="Konstantinidis K."/>
            <person name="Klappenback J."/>
            <person name="Tiedje J."/>
            <person name="Richardson P."/>
        </authorList>
    </citation>
    <scope>NUCLEOTIDE SEQUENCE [LARGE SCALE GENOMIC DNA]</scope>
    <source>
        <strain>ANA-3</strain>
    </source>
</reference>
<name>XERC_SHESA</name>
<keyword id="KW-0131">Cell cycle</keyword>
<keyword id="KW-0132">Cell division</keyword>
<keyword id="KW-0159">Chromosome partition</keyword>
<keyword id="KW-0963">Cytoplasm</keyword>
<keyword id="KW-0229">DNA integration</keyword>
<keyword id="KW-0233">DNA recombination</keyword>
<keyword id="KW-0238">DNA-binding</keyword>
<protein>
    <recommendedName>
        <fullName evidence="1">Tyrosine recombinase XerC</fullName>
    </recommendedName>
</protein>
<feature type="chain" id="PRO_1000073669" description="Tyrosine recombinase XerC">
    <location>
        <begin position="1"/>
        <end position="299"/>
    </location>
</feature>
<feature type="domain" description="Core-binding (CB)" evidence="3">
    <location>
        <begin position="3"/>
        <end position="87"/>
    </location>
</feature>
<feature type="domain" description="Tyr recombinase" evidence="2">
    <location>
        <begin position="108"/>
        <end position="287"/>
    </location>
</feature>
<feature type="active site" evidence="1">
    <location>
        <position position="147"/>
    </location>
</feature>
<feature type="active site" evidence="1">
    <location>
        <position position="171"/>
    </location>
</feature>
<feature type="active site" evidence="1">
    <location>
        <position position="239"/>
    </location>
</feature>
<feature type="active site" evidence="1">
    <location>
        <position position="242"/>
    </location>
</feature>
<feature type="active site" evidence="1">
    <location>
        <position position="265"/>
    </location>
</feature>
<feature type="active site" description="O-(3'-phospho-DNA)-tyrosine intermediate" evidence="1">
    <location>
        <position position="274"/>
    </location>
</feature>
<organism>
    <name type="scientific">Shewanella sp. (strain ANA-3)</name>
    <dbReference type="NCBI Taxonomy" id="94122"/>
    <lineage>
        <taxon>Bacteria</taxon>
        <taxon>Pseudomonadati</taxon>
        <taxon>Pseudomonadota</taxon>
        <taxon>Gammaproteobacteria</taxon>
        <taxon>Alteromonadales</taxon>
        <taxon>Shewanellaceae</taxon>
        <taxon>Shewanella</taxon>
    </lineage>
</organism>
<gene>
    <name evidence="1" type="primary">xerC</name>
    <name type="ordered locus">Shewana3_0393</name>
</gene>